<proteinExistence type="evidence at transcript level"/>
<feature type="signal peptide" evidence="2">
    <location>
        <begin position="1"/>
        <end position="16"/>
    </location>
</feature>
<feature type="chain" id="PRO_0000443051" description="Oxidoreductase ptaL">
    <location>
        <begin position="17"/>
        <end position="372"/>
    </location>
</feature>
<feature type="binding site" evidence="2">
    <location>
        <begin position="8"/>
        <end position="12"/>
    </location>
    <ligand>
        <name>6-hydroxy-FAD</name>
        <dbReference type="ChEBI" id="CHEBI:60470"/>
    </ligand>
</feature>
<feature type="binding site" evidence="2">
    <location>
        <position position="51"/>
    </location>
    <ligand>
        <name>6-hydroxy-FAD</name>
        <dbReference type="ChEBI" id="CHEBI:60470"/>
    </ligand>
</feature>
<feature type="binding site" evidence="2">
    <location>
        <position position="285"/>
    </location>
    <ligand>
        <name>6-hydroxy-FAD</name>
        <dbReference type="ChEBI" id="CHEBI:60470"/>
    </ligand>
</feature>
<feature type="glycosylation site" description="N-linked (GlcNAc...) asparagine" evidence="3">
    <location>
        <position position="251"/>
    </location>
</feature>
<keyword id="KW-0274">FAD</keyword>
<keyword id="KW-0285">Flavoprotein</keyword>
<keyword id="KW-0325">Glycoprotein</keyword>
<keyword id="KW-0560">Oxidoreductase</keyword>
<keyword id="KW-1185">Reference proteome</keyword>
<keyword id="KW-0732">Signal</keyword>
<accession>A0A067XMP1</accession>
<accession>W3WSW3</accession>
<reference key="1">
    <citation type="journal article" date="2014" name="ChemBioChem">
        <title>Identification of the first diphenyl ether gene cluster for pestheic acid biosynthesis in plant endophyte Pestalotiopsis fici.</title>
        <authorList>
            <person name="Xu X."/>
            <person name="Liu L."/>
            <person name="Zhang F."/>
            <person name="Wang W."/>
            <person name="Li J."/>
            <person name="Guo L."/>
            <person name="Che Y."/>
            <person name="Liu G."/>
        </authorList>
    </citation>
    <scope>NUCLEOTIDE SEQUENCE [GENOMIC DNA]</scope>
    <scope>FUNCTION</scope>
    <scope>INDUCTION</scope>
    <source>
        <strain>W106-1 / CGMCC3.15140</strain>
    </source>
</reference>
<reference key="2">
    <citation type="journal article" date="2015" name="BMC Genomics">
        <title>Genomic and transcriptomic analysis of the endophytic fungus Pestalotiopsis fici reveals its lifestyle and high potential for synthesis of natural products.</title>
        <authorList>
            <person name="Wang X."/>
            <person name="Zhang X."/>
            <person name="Liu L."/>
            <person name="Xiang M."/>
            <person name="Wang W."/>
            <person name="Sun X."/>
            <person name="Che Y."/>
            <person name="Guo L."/>
            <person name="Liu G."/>
            <person name="Guo L."/>
            <person name="Wang C."/>
            <person name="Yin W.B."/>
            <person name="Stadler M."/>
            <person name="Zhang X."/>
            <person name="Liu X."/>
        </authorList>
    </citation>
    <scope>NUCLEOTIDE SEQUENCE [LARGE SCALE GENOMIC DNA]</scope>
    <scope>INDUCTION</scope>
    <source>
        <strain>W106-1 / CGMCC3.15140</strain>
    </source>
</reference>
<evidence type="ECO:0000250" key="1">
    <source>
        <dbReference type="UniProtKB" id="Q9BRQ8"/>
    </source>
</evidence>
<evidence type="ECO:0000255" key="2"/>
<evidence type="ECO:0000255" key="3">
    <source>
        <dbReference type="PROSITE-ProRule" id="PRU00498"/>
    </source>
</evidence>
<evidence type="ECO:0000269" key="4">
    <source>
    </source>
</evidence>
<evidence type="ECO:0000269" key="5">
    <source>
    </source>
</evidence>
<evidence type="ECO:0000303" key="6">
    <source>
    </source>
</evidence>
<evidence type="ECO:0000305" key="7"/>
<evidence type="ECO:0000305" key="8">
    <source>
    </source>
</evidence>
<name>PTAL_PESFW</name>
<comment type="function">
    <text evidence="4">Oxidoreductase; part of the gene cluster that mediates the biosynthesis of pestheic acid, a diphenyl ether which is a biosynthetic precursor of the unique chloropupukeananes (PubMed:24302702). The biosynthesis initiates from condensation of acetate and malonate units catalyzed by the non-reducing PKS ptaA (PubMed:24302702). As the ptaA protein is TE/CLC domain-deficient, hydrolysis and Claisen cyclization of the polyketide could be catalyzed by ptaB containing a beta-lactamase domain (PubMed:24302702). The ptaB protein might hydrolyze the thioester bond between the ACP of ptaA and the intermediate to release atrochrysone carboxylic acid, which is spontaneously dehydrated to form endocrocin anthrone (PubMed:24302702). Endocrocin anthrone is then converted to endocrocin, catalyzed by the anthrone oxygenase ptaC (PubMed:24302702). Spontaneous decarboxylation of endocrocin occurs to generate emodin (PubMed:24302702). An O-methyltransferase (ptaH or ptaI) could methylate emodin to form physcion (PubMed:24302702). PtaJ could then catalyze the oxidative cleavage of physcion, and rotation of the intermediate could then afford desmethylisosulochrin (PubMed:24302702). PtaF, a putative NADH-dependent oxidoreductase, might also participate in the oxidative cleavage step (PubMed:24302702). Desmethylisosulochrin is then transformed by another O-methyltransferase (ptaH or ptaI) to form isosulochrin (PubMed:24302702). Chlorination of isosulochrin by ptaM in the cyclohexadienone B ring then produces chloroisosulochrin (PubMed:24302702). PtaE is responsible for the oxidative coupling reactions of both benzophenones isosulochrin and chloroisosulochrin to RES-1214-1 and pestheic acid respectively, regardless of chlorination.</text>
</comment>
<comment type="cofactor">
    <cofactor evidence="1">
        <name>6-hydroxy-FAD</name>
        <dbReference type="ChEBI" id="CHEBI:60470"/>
    </cofactor>
    <text evidence="1">Binds 6-hydroxy-FAD non-covalently.</text>
</comment>
<comment type="pathway">
    <text evidence="8">Secondary metabolite biosynthesis.</text>
</comment>
<comment type="induction">
    <text evidence="5 8">The cluster is expressed in rice fermentation medium (PubMed:25623211). Three regulators are located in the cluster (ptaR1, ptaR2 and ptaR3), suggesting that the production of pestheic acid is controlled by a complex regulatory mechanism (PubMed:24302702).</text>
</comment>
<comment type="similarity">
    <text evidence="7">Belongs to the FAD-dependent oxidoreductase family.</text>
</comment>
<comment type="sequence caution" evidence="7">
    <conflict type="erroneous initiation">
        <sequence resource="EMBL-CDS" id="ETS76963"/>
    </conflict>
    <text>Extended N-terminus.</text>
</comment>
<dbReference type="EC" id="1.-.-.-" evidence="8"/>
<dbReference type="EMBL" id="KC145148">
    <property type="protein sequence ID" value="AGO59047.1"/>
    <property type="molecule type" value="Genomic_DNA"/>
</dbReference>
<dbReference type="EMBL" id="KI912116">
    <property type="protein sequence ID" value="ETS76963.1"/>
    <property type="status" value="ALT_INIT"/>
    <property type="molecule type" value="Genomic_DNA"/>
</dbReference>
<dbReference type="RefSeq" id="XP_007837609.1">
    <property type="nucleotide sequence ID" value="XM_007839418.1"/>
</dbReference>
<dbReference type="SMR" id="A0A067XMP1"/>
<dbReference type="STRING" id="1229662.A0A067XMP1"/>
<dbReference type="GlyCosmos" id="A0A067XMP1">
    <property type="glycosylation" value="1 site, No reported glycans"/>
</dbReference>
<dbReference type="GeneID" id="19275850"/>
<dbReference type="KEGG" id="pfy:PFICI_10837"/>
<dbReference type="eggNOG" id="KOG2495">
    <property type="taxonomic scope" value="Eukaryota"/>
</dbReference>
<dbReference type="InParanoid" id="A0A067XMP1"/>
<dbReference type="OrthoDB" id="202203at2759"/>
<dbReference type="Proteomes" id="UP000030651">
    <property type="component" value="Unassembled WGS sequence"/>
</dbReference>
<dbReference type="GO" id="GO:0005737">
    <property type="term" value="C:cytoplasm"/>
    <property type="evidence" value="ECO:0007669"/>
    <property type="project" value="TreeGrafter"/>
</dbReference>
<dbReference type="GO" id="GO:0004174">
    <property type="term" value="F:electron-transferring-flavoprotein dehydrogenase activity"/>
    <property type="evidence" value="ECO:0007669"/>
    <property type="project" value="TreeGrafter"/>
</dbReference>
<dbReference type="GO" id="GO:0050660">
    <property type="term" value="F:flavin adenine dinucleotide binding"/>
    <property type="evidence" value="ECO:0007669"/>
    <property type="project" value="TreeGrafter"/>
</dbReference>
<dbReference type="Gene3D" id="3.50.50.100">
    <property type="match status" value="1"/>
</dbReference>
<dbReference type="InterPro" id="IPR036188">
    <property type="entry name" value="FAD/NAD-bd_sf"/>
</dbReference>
<dbReference type="InterPro" id="IPR023753">
    <property type="entry name" value="FAD/NAD-binding_dom"/>
</dbReference>
<dbReference type="PANTHER" id="PTHR43735">
    <property type="entry name" value="APOPTOSIS-INDUCING FACTOR 1"/>
    <property type="match status" value="1"/>
</dbReference>
<dbReference type="PANTHER" id="PTHR43735:SF3">
    <property type="entry name" value="FERROPTOSIS SUPPRESSOR PROTEIN 1"/>
    <property type="match status" value="1"/>
</dbReference>
<dbReference type="Pfam" id="PF07992">
    <property type="entry name" value="Pyr_redox_2"/>
    <property type="match status" value="1"/>
</dbReference>
<dbReference type="PRINTS" id="PR00368">
    <property type="entry name" value="FADPNR"/>
</dbReference>
<dbReference type="PRINTS" id="PR00469">
    <property type="entry name" value="PNDRDTASEII"/>
</dbReference>
<dbReference type="SUPFAM" id="SSF51905">
    <property type="entry name" value="FAD/NAD(P)-binding domain"/>
    <property type="match status" value="1"/>
</dbReference>
<gene>
    <name evidence="6" type="primary">ptaL</name>
    <name type="ORF">PFICI_10837</name>
</gene>
<organism>
    <name type="scientific">Pestalotiopsis fici (strain W106-1 / CGMCC3.15140)</name>
    <dbReference type="NCBI Taxonomy" id="1229662"/>
    <lineage>
        <taxon>Eukaryota</taxon>
        <taxon>Fungi</taxon>
        <taxon>Dikarya</taxon>
        <taxon>Ascomycota</taxon>
        <taxon>Pezizomycotina</taxon>
        <taxon>Sordariomycetes</taxon>
        <taxon>Xylariomycetidae</taxon>
        <taxon>Amphisphaeriales</taxon>
        <taxon>Sporocadaceae</taxon>
        <taxon>Pestalotiopsis</taxon>
    </lineage>
</organism>
<sequence>MKHIVIIGGGFAGVSTAHRFLKNVGKSTTAPYKVTLVSRDSHFFWNIAAPRGIIPGQIPEEKLFQPIAEGFSQYGPDKFEFVLGTATDLDVGGKTLVVDVDGKATRISYDYLIIGSGSRTKIPGPFKSDGSTDGVKQTIHDFQERVKAAKTIVVVGAGPTGVETAGELAFEYGTSKKIILISGGPTVLENRPASVTKTALKQLETLNVDVRVNTKAKDPVTLPDGKKELTLSGGEKLVVDLYIPTFGVLPNSSFVPSQYLDSNGFVQVDQYFQVKGAEGVFAIGDVSDSEAPQFWFVEKQSVHIAKNLILSLSGKAPTPYKASATGMMGLQIGKNSGTGHFGNFKLPGFLVKTIRKTLFVENLPKTVDGSML</sequence>
<protein>
    <recommendedName>
        <fullName evidence="6">Oxidoreductase ptaL</fullName>
        <ecNumber evidence="8">1.-.-.-</ecNumber>
    </recommendedName>
    <alternativeName>
        <fullName evidence="6">Pestheic acid biosynthesis cluster protein L</fullName>
    </alternativeName>
</protein>